<accession>B7H8F2</accession>
<organism>
    <name type="scientific">Bacillus cereus (strain B4264)</name>
    <dbReference type="NCBI Taxonomy" id="405532"/>
    <lineage>
        <taxon>Bacteria</taxon>
        <taxon>Bacillati</taxon>
        <taxon>Bacillota</taxon>
        <taxon>Bacilli</taxon>
        <taxon>Bacillales</taxon>
        <taxon>Bacillaceae</taxon>
        <taxon>Bacillus</taxon>
        <taxon>Bacillus cereus group</taxon>
    </lineage>
</organism>
<name>Y3061_BACC4</name>
<proteinExistence type="inferred from homology"/>
<sequence>MKIYVDADACPVKDVIIFEATNAEIPVTLVTSFSHYSNAEQPKGVETIYVDSGADAADYRIMQLAKKEDLIVTQDYGLASLALAKGCIVLHHKGYKYTNDNIEQLLQTRYLSAMVRKSGKRTKGPKPFTAEDKEKFRALFKSMIAL</sequence>
<protein>
    <recommendedName>
        <fullName evidence="1">UPF0178 protein BCB4264_A3061</fullName>
    </recommendedName>
</protein>
<gene>
    <name type="ordered locus">BCB4264_A3061</name>
</gene>
<feature type="chain" id="PRO_1000126174" description="UPF0178 protein BCB4264_A3061">
    <location>
        <begin position="1"/>
        <end position="146"/>
    </location>
</feature>
<reference key="1">
    <citation type="submission" date="2008-10" db="EMBL/GenBank/DDBJ databases">
        <title>Genome sequence of Bacillus cereus B4264.</title>
        <authorList>
            <person name="Dodson R.J."/>
            <person name="Durkin A.S."/>
            <person name="Rosovitz M.J."/>
            <person name="Rasko D.A."/>
            <person name="Hoffmaster A."/>
            <person name="Ravel J."/>
            <person name="Sutton G."/>
        </authorList>
    </citation>
    <scope>NUCLEOTIDE SEQUENCE [LARGE SCALE GENOMIC DNA]</scope>
    <source>
        <strain>B4264</strain>
    </source>
</reference>
<evidence type="ECO:0000255" key="1">
    <source>
        <dbReference type="HAMAP-Rule" id="MF_00489"/>
    </source>
</evidence>
<comment type="similarity">
    <text evidence="1">Belongs to the UPF0178 family.</text>
</comment>
<dbReference type="EMBL" id="CP001176">
    <property type="protein sequence ID" value="ACK60411.1"/>
    <property type="molecule type" value="Genomic_DNA"/>
</dbReference>
<dbReference type="RefSeq" id="WP_000708761.1">
    <property type="nucleotide sequence ID" value="NZ_VEHB01000001.1"/>
</dbReference>
<dbReference type="KEGG" id="bcb:BCB4264_A3061"/>
<dbReference type="HOGENOM" id="CLU_106619_0_0_9"/>
<dbReference type="Proteomes" id="UP000007096">
    <property type="component" value="Chromosome"/>
</dbReference>
<dbReference type="HAMAP" id="MF_00489">
    <property type="entry name" value="UPF0178"/>
    <property type="match status" value="1"/>
</dbReference>
<dbReference type="InterPro" id="IPR003791">
    <property type="entry name" value="UPF0178"/>
</dbReference>
<dbReference type="NCBIfam" id="NF001095">
    <property type="entry name" value="PRK00124.1"/>
    <property type="match status" value="1"/>
</dbReference>
<dbReference type="PANTHER" id="PTHR35146">
    <property type="entry name" value="UPF0178 PROTEIN YAII"/>
    <property type="match status" value="1"/>
</dbReference>
<dbReference type="PANTHER" id="PTHR35146:SF1">
    <property type="entry name" value="UPF0178 PROTEIN YAII"/>
    <property type="match status" value="1"/>
</dbReference>
<dbReference type="Pfam" id="PF02639">
    <property type="entry name" value="DUF188"/>
    <property type="match status" value="1"/>
</dbReference>